<organismHost>
    <name type="scientific">Homo sapiens</name>
    <name type="common">Human</name>
    <dbReference type="NCBI Taxonomy" id="9606"/>
</organismHost>
<accession>Q74121</accession>
<name>VIF_HV2KR</name>
<proteinExistence type="evidence at transcript level"/>
<reference key="1">
    <citation type="submission" date="1995-04" db="EMBL/GenBank/DDBJ databases">
        <authorList>
            <person name="Kraus G.K."/>
            <person name="Talbott R."/>
            <person name="Leavitt M."/>
            <person name="Luznick L."/>
            <person name="Schmidt A."/>
            <person name="Badel P."/>
            <person name="Bartz C."/>
            <person name="Morton W."/>
            <person name="Wong-Staal F."/>
            <person name="Looney D.J."/>
        </authorList>
    </citation>
    <scope>NUCLEOTIDE SEQUENCE [GENOMIC DNA]</scope>
</reference>
<sequence>MEEGERWIVVPTWRVPGRMEKWHSLVKYLKHRTKDLEGVCYVPHHKVGWAWWTCSRVIFPLQGNSHLEIQAYWNLTPEKGWLSSYAVRITWYTERFWTDVTPDCADSLIHSTYFSCFTAGEVRRAIRGEKLLSCCNYPQAHRSKVPLLQFLALVVVQQNGRPQKNSTTRKRWRSNYWRGFRLARKDGRGHKQRGSEPPASGAYFPGVAKVLEILA</sequence>
<keyword id="KW-0014">AIDS</keyword>
<keyword id="KW-1032">Host cell membrane</keyword>
<keyword id="KW-1035">Host cytoplasm</keyword>
<keyword id="KW-1043">Host membrane</keyword>
<keyword id="KW-0945">Host-virus interaction</keyword>
<keyword id="KW-0472">Membrane</keyword>
<keyword id="KW-0597">Phosphoprotein</keyword>
<keyword id="KW-0832">Ubl conjugation</keyword>
<keyword id="KW-0833">Ubl conjugation pathway</keyword>
<keyword id="KW-0946">Virion</keyword>
<dbReference type="EMBL" id="U22047">
    <property type="protein sequence ID" value="AAA64577.1"/>
    <property type="molecule type" value="Genomic_DNA"/>
</dbReference>
<dbReference type="SMR" id="Q74121"/>
<dbReference type="Proteomes" id="UP000007425">
    <property type="component" value="Segment"/>
</dbReference>
<dbReference type="GO" id="GO:0030430">
    <property type="term" value="C:host cell cytoplasm"/>
    <property type="evidence" value="ECO:0007669"/>
    <property type="project" value="UniProtKB-SubCell"/>
</dbReference>
<dbReference type="GO" id="GO:0020002">
    <property type="term" value="C:host cell plasma membrane"/>
    <property type="evidence" value="ECO:0007669"/>
    <property type="project" value="UniProtKB-SubCell"/>
</dbReference>
<dbReference type="GO" id="GO:0016020">
    <property type="term" value="C:membrane"/>
    <property type="evidence" value="ECO:0007669"/>
    <property type="project" value="UniProtKB-KW"/>
</dbReference>
<dbReference type="GO" id="GO:0044423">
    <property type="term" value="C:virion component"/>
    <property type="evidence" value="ECO:0007669"/>
    <property type="project" value="UniProtKB-KW"/>
</dbReference>
<dbReference type="GO" id="GO:0019058">
    <property type="term" value="P:viral life cycle"/>
    <property type="evidence" value="ECO:0007669"/>
    <property type="project" value="InterPro"/>
</dbReference>
<dbReference type="InterPro" id="IPR000475">
    <property type="entry name" value="Vif"/>
</dbReference>
<dbReference type="Pfam" id="PF00559">
    <property type="entry name" value="Vif"/>
    <property type="match status" value="1"/>
</dbReference>
<dbReference type="PRINTS" id="PR00349">
    <property type="entry name" value="VIRIONINFFCT"/>
</dbReference>
<feature type="chain" id="PRO_0000085321" description="Virion infectivity factor">
    <location>
        <begin position="1"/>
        <end position="215"/>
    </location>
</feature>
<feature type="region of interest" description="Multimerization" evidence="1">
    <location>
        <begin position="154"/>
        <end position="167"/>
    </location>
</feature>
<feature type="short sequence motif" description="HCCH motif" evidence="1">
    <location>
        <begin position="110"/>
        <end position="141"/>
    </location>
</feature>
<feature type="short sequence motif" description="BC-box-like motif" evidence="1">
    <location>
        <begin position="147"/>
        <end position="156"/>
    </location>
</feature>
<feature type="modified residue" description="Phosphothreonine; by host MAP4K1" evidence="1">
    <location>
        <position position="98"/>
    </location>
</feature>
<organism>
    <name type="scientific">Human immunodeficiency virus type 2 subtype A (isolate KR)</name>
    <name type="common">HIV-2</name>
    <dbReference type="NCBI Taxonomy" id="73484"/>
    <lineage>
        <taxon>Viruses</taxon>
        <taxon>Riboviria</taxon>
        <taxon>Pararnavirae</taxon>
        <taxon>Artverviricota</taxon>
        <taxon>Revtraviricetes</taxon>
        <taxon>Ortervirales</taxon>
        <taxon>Retroviridae</taxon>
        <taxon>Orthoretrovirinae</taxon>
        <taxon>Lentivirus</taxon>
        <taxon>Human immunodeficiency virus 2</taxon>
    </lineage>
</organism>
<protein>
    <recommendedName>
        <fullName>Virion infectivity factor</fullName>
        <shortName>Vif</shortName>
    </recommendedName>
    <alternativeName>
        <fullName>Q protein</fullName>
    </alternativeName>
    <alternativeName>
        <fullName>SOR protein</fullName>
    </alternativeName>
</protein>
<gene>
    <name type="primary">vif</name>
</gene>
<evidence type="ECO:0000250" key="1"/>
<evidence type="ECO:0000305" key="2"/>
<comment type="function">
    <text evidence="1">Counteracts the innate antiviral activity of APOBEC3G. Forms a complex with host APOBEC3G thus preventing the entry of this lethally hypermutating enzyme into progeny virions. Functions as an adapter molecule, recruiting APOBEC3G to the ubiquitin-proteasome machinery. Targets APOBEC3G for degradation through the assembly with elongin BC complex, CUL5 and RBX1. Binds viral RNA and affects the stability of viral nucleoprotein core. May play a role in viral morphology (By similarity).</text>
</comment>
<comment type="subunit">
    <text evidence="1">Homomultimer; in vitro and presumably in vivo. Interacts with viral Pr55Gag precursor and human APOBEC3G. The interaction between Vif and APOBEC3G is species-specific, which may play a role in restricting the replication of HIV to humans. Forms an E3 ligase complex by interacting with human CUL5 and elongin BC complex (ELOB and ELOC) (By similarity).</text>
</comment>
<comment type="subcellular location">
    <subcellularLocation>
        <location evidence="1">Host cytoplasm</location>
    </subcellularLocation>
    <subcellularLocation>
        <location evidence="1">Host cell membrane</location>
        <topology evidence="1">Peripheral membrane protein</topology>
        <orientation evidence="1">Cytoplasmic side</orientation>
    </subcellularLocation>
    <subcellularLocation>
        <location evidence="1">Virion</location>
    </subcellularLocation>
    <text evidence="1">In the cytoplasm, seems to colocalize with intermediate filament vimentin. A fraction is associated with the cytoplasmic side of cellular membranes, presumably via the interaction with Pr55Gag precursor (By similarity).</text>
</comment>
<comment type="induction">
    <text>Expressed late during infection in a Rev-dependent manner.</text>
</comment>
<comment type="domain">
    <text evidence="1">The BC-like-box motif mediates the interaction with elongin BC complex.</text>
</comment>
<comment type="domain">
    <text evidence="1">The HCCH motif (H-x(5)-C-x(18)-C-x(5)-H) mediates the interaction with CUL5.</text>
</comment>
<comment type="PTM">
    <text evidence="1">Processed in virion by the viral protease.</text>
</comment>
<comment type="PTM">
    <text evidence="1">Highly phosphorylated on serine and threonine residues.</text>
</comment>
<comment type="PTM">
    <text evidence="1">Polyubiquitinated and degraded by the proteasome in the presence of APOBEC3G.</text>
</comment>
<comment type="miscellaneous">
    <text>Required for replication in 'nonpermissive' cells, including primary T-cells, macrophages and certain T-cell lines, but is dispensable for replication in 'permissive' cell lines, such as 293T cells. In nonpermissive cells, Vif-defective viruses can produce virions, but they fail to complete reverse transcription and cannot successfully infect new cells.</text>
</comment>
<comment type="miscellaneous">
    <text>Vif-defective viruses show catastrophic failure in reverse transcription due to APOBEC-induced mutations that initiate a DNA base repair pathway and compromise the structural integrity of the ssDNA. In the absence of Vif, the virion is morphologically abnormal.</text>
</comment>
<comment type="similarity">
    <text evidence="2">Belongs to the primate lentivirus group Vif protein family.</text>
</comment>